<protein>
    <recommendedName>
        <fullName>Acylphosphatase</fullName>
        <ecNumber>3.6.1.7</ecNumber>
    </recommendedName>
    <alternativeName>
        <fullName>Acylphosphate phosphohydrolase</fullName>
    </alternativeName>
</protein>
<name>ACYP_THEP1</name>
<sequence>MKALKIRVEGIVQGVGFRYFTRRVAKSLGVKGYVMNMDDGSVFIHAEGDENALRRFLNEVAKGPPAAVVTNVSVEETTPEGYEDFTIKYY</sequence>
<keyword id="KW-0378">Hydrolase</keyword>
<proteinExistence type="inferred from homology"/>
<organism>
    <name type="scientific">Thermotoga petrophila (strain ATCC BAA-488 / DSM 13995 / JCM 10881 / RKU-1)</name>
    <dbReference type="NCBI Taxonomy" id="390874"/>
    <lineage>
        <taxon>Bacteria</taxon>
        <taxon>Thermotogati</taxon>
        <taxon>Thermotogota</taxon>
        <taxon>Thermotogae</taxon>
        <taxon>Thermotogales</taxon>
        <taxon>Thermotogaceae</taxon>
        <taxon>Thermotoga</taxon>
    </lineage>
</organism>
<gene>
    <name type="primary">acyP</name>
    <name type="ordered locus">Tpet_1228</name>
</gene>
<reference key="1">
    <citation type="submission" date="2007-05" db="EMBL/GenBank/DDBJ databases">
        <title>Complete sequence of Thermotoga petrophila RKU-1.</title>
        <authorList>
            <consortium name="US DOE Joint Genome Institute"/>
            <person name="Copeland A."/>
            <person name="Lucas S."/>
            <person name="Lapidus A."/>
            <person name="Barry K."/>
            <person name="Glavina del Rio T."/>
            <person name="Dalin E."/>
            <person name="Tice H."/>
            <person name="Pitluck S."/>
            <person name="Sims D."/>
            <person name="Brettin T."/>
            <person name="Bruce D."/>
            <person name="Detter J.C."/>
            <person name="Han C."/>
            <person name="Tapia R."/>
            <person name="Schmutz J."/>
            <person name="Larimer F."/>
            <person name="Land M."/>
            <person name="Hauser L."/>
            <person name="Kyrpides N."/>
            <person name="Mikhailova N."/>
            <person name="Nelson K."/>
            <person name="Gogarten J.P."/>
            <person name="Noll K."/>
            <person name="Richardson P."/>
        </authorList>
    </citation>
    <scope>NUCLEOTIDE SEQUENCE [LARGE SCALE GENOMIC DNA]</scope>
    <source>
        <strain>ATCC BAA-488 / DSM 13995 / JCM 10881 / RKU-1</strain>
    </source>
</reference>
<accession>A5IM19</accession>
<comment type="catalytic activity">
    <reaction>
        <text>an acyl phosphate + H2O = a carboxylate + phosphate + H(+)</text>
        <dbReference type="Rhea" id="RHEA:14965"/>
        <dbReference type="ChEBI" id="CHEBI:15377"/>
        <dbReference type="ChEBI" id="CHEBI:15378"/>
        <dbReference type="ChEBI" id="CHEBI:29067"/>
        <dbReference type="ChEBI" id="CHEBI:43474"/>
        <dbReference type="ChEBI" id="CHEBI:59918"/>
        <dbReference type="EC" id="3.6.1.7"/>
    </reaction>
</comment>
<comment type="similarity">
    <text evidence="2">Belongs to the acylphosphatase family.</text>
</comment>
<dbReference type="EC" id="3.6.1.7"/>
<dbReference type="EMBL" id="CP000702">
    <property type="protein sequence ID" value="ABQ47242.1"/>
    <property type="molecule type" value="Genomic_DNA"/>
</dbReference>
<dbReference type="RefSeq" id="WP_004081975.1">
    <property type="nucleotide sequence ID" value="NC_009486.1"/>
</dbReference>
<dbReference type="SMR" id="A5IM19"/>
<dbReference type="STRING" id="390874.Tpet_1228"/>
<dbReference type="KEGG" id="tpt:Tpet_1228"/>
<dbReference type="eggNOG" id="COG1254">
    <property type="taxonomic scope" value="Bacteria"/>
</dbReference>
<dbReference type="HOGENOM" id="CLU_141932_2_1_0"/>
<dbReference type="Proteomes" id="UP000006558">
    <property type="component" value="Chromosome"/>
</dbReference>
<dbReference type="GO" id="GO:0003998">
    <property type="term" value="F:acylphosphatase activity"/>
    <property type="evidence" value="ECO:0007669"/>
    <property type="project" value="UniProtKB-EC"/>
</dbReference>
<dbReference type="Gene3D" id="3.30.70.100">
    <property type="match status" value="1"/>
</dbReference>
<dbReference type="InterPro" id="IPR020456">
    <property type="entry name" value="Acylphosphatase"/>
</dbReference>
<dbReference type="InterPro" id="IPR001792">
    <property type="entry name" value="Acylphosphatase-like_dom"/>
</dbReference>
<dbReference type="InterPro" id="IPR036046">
    <property type="entry name" value="Acylphosphatase-like_dom_sf"/>
</dbReference>
<dbReference type="InterPro" id="IPR017968">
    <property type="entry name" value="Acylphosphatase_CS"/>
</dbReference>
<dbReference type="NCBIfam" id="NF011009">
    <property type="entry name" value="PRK14435.1"/>
    <property type="match status" value="1"/>
</dbReference>
<dbReference type="PANTHER" id="PTHR47268">
    <property type="entry name" value="ACYLPHOSPHATASE"/>
    <property type="match status" value="1"/>
</dbReference>
<dbReference type="PANTHER" id="PTHR47268:SF4">
    <property type="entry name" value="ACYLPHOSPHATASE"/>
    <property type="match status" value="1"/>
</dbReference>
<dbReference type="Pfam" id="PF00708">
    <property type="entry name" value="Acylphosphatase"/>
    <property type="match status" value="1"/>
</dbReference>
<dbReference type="SUPFAM" id="SSF54975">
    <property type="entry name" value="Acylphosphatase/BLUF domain-like"/>
    <property type="match status" value="1"/>
</dbReference>
<dbReference type="PROSITE" id="PS00150">
    <property type="entry name" value="ACYLPHOSPHATASE_1"/>
    <property type="match status" value="1"/>
</dbReference>
<dbReference type="PROSITE" id="PS00151">
    <property type="entry name" value="ACYLPHOSPHATASE_2"/>
    <property type="match status" value="1"/>
</dbReference>
<dbReference type="PROSITE" id="PS51160">
    <property type="entry name" value="ACYLPHOSPHATASE_3"/>
    <property type="match status" value="1"/>
</dbReference>
<feature type="chain" id="PRO_0000326834" description="Acylphosphatase">
    <location>
        <begin position="1"/>
        <end position="90"/>
    </location>
</feature>
<feature type="domain" description="Acylphosphatase-like" evidence="1">
    <location>
        <begin position="3"/>
        <end position="89"/>
    </location>
</feature>
<feature type="active site" evidence="1">
    <location>
        <position position="18"/>
    </location>
</feature>
<feature type="active site" evidence="1">
    <location>
        <position position="36"/>
    </location>
</feature>
<evidence type="ECO:0000255" key="1">
    <source>
        <dbReference type="PROSITE-ProRule" id="PRU00520"/>
    </source>
</evidence>
<evidence type="ECO:0000305" key="2"/>